<keyword id="KW-0378">Hydrolase</keyword>
<keyword id="KW-0460">Magnesium</keyword>
<keyword id="KW-0511">Multifunctional enzyme</keyword>
<keyword id="KW-0548">Nucleotidyltransferase</keyword>
<keyword id="KW-0677">Repeat</keyword>
<keyword id="KW-0808">Transferase</keyword>
<name>GLND_ACIBY</name>
<proteinExistence type="inferred from homology"/>
<gene>
    <name evidence="1" type="primary">glnD</name>
    <name type="ordered locus">ABAYE2180</name>
</gene>
<evidence type="ECO:0000255" key="1">
    <source>
        <dbReference type="HAMAP-Rule" id="MF_00277"/>
    </source>
</evidence>
<evidence type="ECO:0000255" key="2">
    <source>
        <dbReference type="PROSITE-ProRule" id="PRU01175"/>
    </source>
</evidence>
<reference key="1">
    <citation type="journal article" date="2008" name="PLoS ONE">
        <title>Comparative analysis of Acinetobacters: three genomes for three lifestyles.</title>
        <authorList>
            <person name="Vallenet D."/>
            <person name="Nordmann P."/>
            <person name="Barbe V."/>
            <person name="Poirel L."/>
            <person name="Mangenot S."/>
            <person name="Bataille E."/>
            <person name="Dossat C."/>
            <person name="Gas S."/>
            <person name="Kreimeyer A."/>
            <person name="Lenoble P."/>
            <person name="Oztas S."/>
            <person name="Poulain J."/>
            <person name="Segurens B."/>
            <person name="Robert C."/>
            <person name="Abergel C."/>
            <person name="Claverie J.-M."/>
            <person name="Raoult D."/>
            <person name="Medigue C."/>
            <person name="Weissenbach J."/>
            <person name="Cruveiller S."/>
        </authorList>
    </citation>
    <scope>NUCLEOTIDE SEQUENCE [LARGE SCALE GENOMIC DNA]</scope>
    <source>
        <strain>AYE</strain>
    </source>
</reference>
<organism>
    <name type="scientific">Acinetobacter baumannii (strain AYE)</name>
    <dbReference type="NCBI Taxonomy" id="509173"/>
    <lineage>
        <taxon>Bacteria</taxon>
        <taxon>Pseudomonadati</taxon>
        <taxon>Pseudomonadota</taxon>
        <taxon>Gammaproteobacteria</taxon>
        <taxon>Moraxellales</taxon>
        <taxon>Moraxellaceae</taxon>
        <taxon>Acinetobacter</taxon>
        <taxon>Acinetobacter calcoaceticus/baumannii complex</taxon>
    </lineage>
</organism>
<accession>B0VC63</accession>
<comment type="function">
    <text evidence="1">Modifies, by uridylylation and deuridylylation, the PII regulatory proteins (GlnB and homologs), in response to the nitrogen status of the cell that GlnD senses through the glutamine level. Under low glutamine levels, catalyzes the conversion of the PII proteins and UTP to PII-UMP and PPi, while under higher glutamine levels, GlnD hydrolyzes PII-UMP to PII and UMP (deuridylylation). Thus, controls uridylylation state and activity of the PII proteins, and plays an important role in the regulation of nitrogen assimilation and metabolism.</text>
</comment>
<comment type="catalytic activity">
    <reaction evidence="1">
        <text>[protein-PII]-L-tyrosine + UTP = [protein-PII]-uridylyl-L-tyrosine + diphosphate</text>
        <dbReference type="Rhea" id="RHEA:13673"/>
        <dbReference type="Rhea" id="RHEA-COMP:12147"/>
        <dbReference type="Rhea" id="RHEA-COMP:12148"/>
        <dbReference type="ChEBI" id="CHEBI:33019"/>
        <dbReference type="ChEBI" id="CHEBI:46398"/>
        <dbReference type="ChEBI" id="CHEBI:46858"/>
        <dbReference type="ChEBI" id="CHEBI:90602"/>
        <dbReference type="EC" id="2.7.7.59"/>
    </reaction>
</comment>
<comment type="catalytic activity">
    <reaction evidence="1">
        <text>[protein-PII]-uridylyl-L-tyrosine + H2O = [protein-PII]-L-tyrosine + UMP + H(+)</text>
        <dbReference type="Rhea" id="RHEA:48600"/>
        <dbReference type="Rhea" id="RHEA-COMP:12147"/>
        <dbReference type="Rhea" id="RHEA-COMP:12148"/>
        <dbReference type="ChEBI" id="CHEBI:15377"/>
        <dbReference type="ChEBI" id="CHEBI:15378"/>
        <dbReference type="ChEBI" id="CHEBI:46858"/>
        <dbReference type="ChEBI" id="CHEBI:57865"/>
        <dbReference type="ChEBI" id="CHEBI:90602"/>
    </reaction>
</comment>
<comment type="cofactor">
    <cofactor evidence="1">
        <name>Mg(2+)</name>
        <dbReference type="ChEBI" id="CHEBI:18420"/>
    </cofactor>
</comment>
<comment type="activity regulation">
    <text evidence="1">Uridylyltransferase (UTase) activity is inhibited by glutamine, while glutamine activates uridylyl-removing (UR) activity.</text>
</comment>
<comment type="domain">
    <text evidence="1">Has four distinct domains: an N-terminal nucleotidyltransferase (NT) domain responsible for UTase activity, a central HD domain that encodes UR activity, and two C-terminal ACT domains that seem to have a role in glutamine sensing.</text>
</comment>
<comment type="similarity">
    <text evidence="1">Belongs to the GlnD family.</text>
</comment>
<sequence length="887" mass="102102">MINTSPLLNYVSSHHDIKAINQWRTDVEKQLQDSYENGQSIREIIKARSDLVDEALVFLWKHAELDQSKLGLFAVGGYGRREMLPYSDVDIMILSEDEISEENEKRISTFISSLWDVGNFKPGISVRTIQSCVEQAATDLTVATTLIEARLITGNTQLAKWPRRIVSQTWTDKTFYDAKMAEQAKRYHQHNNTESNLEPDIKNAPGGIRDINQIGWIAKRHFRVNRIYDLVHLGFISEFELAVLEEAESFLWEIRHHLHRLAKRDENRLLFDHQREIAAKFGYVRQEGQPVNYGVEQFMKRYYRTAQQVSTLNEMLLAYFSESVITPRLPNYERKIEVVNDHFKIVDNKLAVQHHKIFAEHPSAILELFYILANRPDIEGIRARTLRLLILAAKRINQSYRDNPEHQALFMSIIRSPYRLYDTLVAMKRYGVLGNYIPAFGQIMGLMQYDLFHIYTVDAHTLLLLRNLNRFREPEFAKEFPVVSSVFQRLARQDIVFIAALFHDIAKGRGGDHSELGAEDAIEFGRAHGFTERECKLIAWLIQNHLLMSLTAQKKDISDPDVVKDFAEKLGDMEHLDYLYTLTVADINATNPKLWNTWRASLMRQLYTHARDVIRTGLGRPVDYQMLIEDTKFAASELLVNNFALADVEKVWQELGDEYFIKESADEIAWHTQAILKHGDNPEPLVLLRAHRKAAQDAVQIFIYTRDQPNLFATTVAVLDRMNLDVQDAKIITASTAFSLDTYVVLDRFGTLLTDPEREETVKNALVKALSQPDQYPGLMQRRIPRQLRHFDIENTVDVTLNEALQQNMVEISTLDHPGLLARVGGLFMMQGLDIHSARIATLGERAEDIFFVTKKDGKPLNNEEVKLFSEKLKAALDEASNQICQH</sequence>
<feature type="chain" id="PRO_1000114749" description="Bifunctional uridylyltransferase/uridylyl-removing enzyme">
    <location>
        <begin position="1"/>
        <end position="887"/>
    </location>
</feature>
<feature type="domain" description="HD" evidence="2">
    <location>
        <begin position="457"/>
        <end position="579"/>
    </location>
</feature>
<feature type="domain" description="ACT 1" evidence="1">
    <location>
        <begin position="700"/>
        <end position="782"/>
    </location>
</feature>
<feature type="domain" description="ACT 2" evidence="1">
    <location>
        <begin position="809"/>
        <end position="887"/>
    </location>
</feature>
<feature type="region of interest" description="Uridylyltransferase">
    <location>
        <begin position="1"/>
        <end position="337"/>
    </location>
</feature>
<feature type="region of interest" description="Uridylyl-removing">
    <location>
        <begin position="339"/>
        <end position="699"/>
    </location>
</feature>
<dbReference type="EC" id="2.7.7.59" evidence="1"/>
<dbReference type="EC" id="3.1.4.-" evidence="1"/>
<dbReference type="EMBL" id="CU459141">
    <property type="protein sequence ID" value="CAM87045.1"/>
    <property type="molecule type" value="Genomic_DNA"/>
</dbReference>
<dbReference type="RefSeq" id="WP_000611178.1">
    <property type="nucleotide sequence ID" value="NZ_JBDGFB010000034.1"/>
</dbReference>
<dbReference type="SMR" id="B0VC63"/>
<dbReference type="EnsemblBacteria" id="CAM87045">
    <property type="protein sequence ID" value="CAM87045"/>
    <property type="gene ID" value="ABAYE2180"/>
</dbReference>
<dbReference type="GeneID" id="92893684"/>
<dbReference type="KEGG" id="aby:ABAYE2180"/>
<dbReference type="HOGENOM" id="CLU_012833_0_0_6"/>
<dbReference type="GO" id="GO:0008773">
    <property type="term" value="F:[protein-PII] uridylyltransferase activity"/>
    <property type="evidence" value="ECO:0007669"/>
    <property type="project" value="UniProtKB-UniRule"/>
</dbReference>
<dbReference type="GO" id="GO:0008081">
    <property type="term" value="F:phosphoric diester hydrolase activity"/>
    <property type="evidence" value="ECO:0007669"/>
    <property type="project" value="UniProtKB-UniRule"/>
</dbReference>
<dbReference type="GO" id="GO:0006808">
    <property type="term" value="P:regulation of nitrogen utilization"/>
    <property type="evidence" value="ECO:0007669"/>
    <property type="project" value="UniProtKB-UniRule"/>
</dbReference>
<dbReference type="CDD" id="cd04899">
    <property type="entry name" value="ACT_ACR-UUR-like_2"/>
    <property type="match status" value="1"/>
</dbReference>
<dbReference type="CDD" id="cd04900">
    <property type="entry name" value="ACT_UUR-like_1"/>
    <property type="match status" value="1"/>
</dbReference>
<dbReference type="CDD" id="cd00077">
    <property type="entry name" value="HDc"/>
    <property type="match status" value="1"/>
</dbReference>
<dbReference type="CDD" id="cd05401">
    <property type="entry name" value="NT_GlnE_GlnD_like"/>
    <property type="match status" value="1"/>
</dbReference>
<dbReference type="Gene3D" id="1.10.3210.10">
    <property type="entry name" value="Hypothetical protein af1432"/>
    <property type="match status" value="1"/>
</dbReference>
<dbReference type="Gene3D" id="1.20.120.330">
    <property type="entry name" value="Nucleotidyltransferases domain 2"/>
    <property type="match status" value="1"/>
</dbReference>
<dbReference type="HAMAP" id="MF_00277">
    <property type="entry name" value="PII_uridylyl_transf"/>
    <property type="match status" value="1"/>
</dbReference>
<dbReference type="InterPro" id="IPR045865">
    <property type="entry name" value="ACT-like_dom_sf"/>
</dbReference>
<dbReference type="InterPro" id="IPR002912">
    <property type="entry name" value="ACT_dom"/>
</dbReference>
<dbReference type="InterPro" id="IPR003607">
    <property type="entry name" value="HD/PDEase_dom"/>
</dbReference>
<dbReference type="InterPro" id="IPR006674">
    <property type="entry name" value="HD_domain"/>
</dbReference>
<dbReference type="InterPro" id="IPR043519">
    <property type="entry name" value="NT_sf"/>
</dbReference>
<dbReference type="InterPro" id="IPR013546">
    <property type="entry name" value="PII_UdlTrfase/GS_AdlTrfase"/>
</dbReference>
<dbReference type="InterPro" id="IPR002934">
    <property type="entry name" value="Polymerase_NTP_transf_dom"/>
</dbReference>
<dbReference type="InterPro" id="IPR010043">
    <property type="entry name" value="UTase/UR"/>
</dbReference>
<dbReference type="NCBIfam" id="TIGR01693">
    <property type="entry name" value="UTase_glnD"/>
    <property type="match status" value="1"/>
</dbReference>
<dbReference type="PANTHER" id="PTHR47320">
    <property type="entry name" value="BIFUNCTIONAL URIDYLYLTRANSFERASE/URIDYLYL-REMOVING ENZYME"/>
    <property type="match status" value="1"/>
</dbReference>
<dbReference type="PANTHER" id="PTHR47320:SF1">
    <property type="entry name" value="BIFUNCTIONAL URIDYLYLTRANSFERASE_URIDYLYL-REMOVING ENZYME"/>
    <property type="match status" value="1"/>
</dbReference>
<dbReference type="Pfam" id="PF01842">
    <property type="entry name" value="ACT"/>
    <property type="match status" value="1"/>
</dbReference>
<dbReference type="Pfam" id="PF08335">
    <property type="entry name" value="GlnD_UR_UTase"/>
    <property type="match status" value="1"/>
</dbReference>
<dbReference type="Pfam" id="PF01966">
    <property type="entry name" value="HD"/>
    <property type="match status" value="1"/>
</dbReference>
<dbReference type="Pfam" id="PF01909">
    <property type="entry name" value="NTP_transf_2"/>
    <property type="match status" value="1"/>
</dbReference>
<dbReference type="PIRSF" id="PIRSF006288">
    <property type="entry name" value="PII_uridyltransf"/>
    <property type="match status" value="1"/>
</dbReference>
<dbReference type="SMART" id="SM00471">
    <property type="entry name" value="HDc"/>
    <property type="match status" value="1"/>
</dbReference>
<dbReference type="SUPFAM" id="SSF55021">
    <property type="entry name" value="ACT-like"/>
    <property type="match status" value="1"/>
</dbReference>
<dbReference type="SUPFAM" id="SSF109604">
    <property type="entry name" value="HD-domain/PDEase-like"/>
    <property type="match status" value="1"/>
</dbReference>
<dbReference type="SUPFAM" id="SSF81301">
    <property type="entry name" value="Nucleotidyltransferase"/>
    <property type="match status" value="1"/>
</dbReference>
<dbReference type="SUPFAM" id="SSF81593">
    <property type="entry name" value="Nucleotidyltransferase substrate binding subunit/domain"/>
    <property type="match status" value="1"/>
</dbReference>
<dbReference type="PROSITE" id="PS51671">
    <property type="entry name" value="ACT"/>
    <property type="match status" value="2"/>
</dbReference>
<dbReference type="PROSITE" id="PS51831">
    <property type="entry name" value="HD"/>
    <property type="match status" value="1"/>
</dbReference>
<protein>
    <recommendedName>
        <fullName evidence="1">Bifunctional uridylyltransferase/uridylyl-removing enzyme</fullName>
        <shortName evidence="1">UTase/UR</shortName>
    </recommendedName>
    <alternativeName>
        <fullName evidence="1">Bifunctional [protein-PII] modification enzyme</fullName>
    </alternativeName>
    <alternativeName>
        <fullName evidence="1">Bifunctional nitrogen sensor protein</fullName>
    </alternativeName>
    <domain>
        <recommendedName>
            <fullName evidence="1">[Protein-PII] uridylyltransferase</fullName>
            <shortName evidence="1">PII uridylyltransferase</shortName>
            <shortName evidence="1">UTase</shortName>
            <ecNumber evidence="1">2.7.7.59</ecNumber>
        </recommendedName>
    </domain>
    <domain>
        <recommendedName>
            <fullName evidence="1">[Protein-PII]-UMP uridylyl-removing enzyme</fullName>
            <shortName evidence="1">UR</shortName>
            <ecNumber evidence="1">3.1.4.-</ecNumber>
        </recommendedName>
    </domain>
</protein>